<accession>B2K4H8</accession>
<dbReference type="EMBL" id="CP001048">
    <property type="protein sequence ID" value="ACC87731.1"/>
    <property type="molecule type" value="Genomic_DNA"/>
</dbReference>
<dbReference type="SMR" id="B2K4H8"/>
<dbReference type="KEGG" id="ypb:YPTS_0747"/>
<dbReference type="PATRIC" id="fig|502801.10.peg.77"/>
<dbReference type="HAMAP" id="MF_01053">
    <property type="entry name" value="UPF0231"/>
    <property type="match status" value="1"/>
</dbReference>
<dbReference type="InterPro" id="IPR008249">
    <property type="entry name" value="UPF0231"/>
</dbReference>
<dbReference type="NCBIfam" id="NF003574">
    <property type="entry name" value="PRK05248.1-1"/>
    <property type="match status" value="1"/>
</dbReference>
<dbReference type="NCBIfam" id="NF003576">
    <property type="entry name" value="PRK05248.1-3"/>
    <property type="match status" value="1"/>
</dbReference>
<dbReference type="Pfam" id="PF06062">
    <property type="entry name" value="UPF0231"/>
    <property type="match status" value="1"/>
</dbReference>
<dbReference type="PIRSF" id="PIRSF006287">
    <property type="entry name" value="UCP006287"/>
    <property type="match status" value="1"/>
</dbReference>
<organism>
    <name type="scientific">Yersinia pseudotuberculosis serotype IB (strain PB1/+)</name>
    <dbReference type="NCBI Taxonomy" id="502801"/>
    <lineage>
        <taxon>Bacteria</taxon>
        <taxon>Pseudomonadati</taxon>
        <taxon>Pseudomonadota</taxon>
        <taxon>Gammaproteobacteria</taxon>
        <taxon>Enterobacterales</taxon>
        <taxon>Yersiniaceae</taxon>
        <taxon>Yersinia</taxon>
    </lineage>
</organism>
<reference key="1">
    <citation type="submission" date="2008-04" db="EMBL/GenBank/DDBJ databases">
        <title>Complete sequence of Yersinia pseudotuberculosis PB1/+.</title>
        <authorList>
            <person name="Copeland A."/>
            <person name="Lucas S."/>
            <person name="Lapidus A."/>
            <person name="Glavina del Rio T."/>
            <person name="Dalin E."/>
            <person name="Tice H."/>
            <person name="Bruce D."/>
            <person name="Goodwin L."/>
            <person name="Pitluck S."/>
            <person name="Munk A.C."/>
            <person name="Brettin T."/>
            <person name="Detter J.C."/>
            <person name="Han C."/>
            <person name="Tapia R."/>
            <person name="Schmutz J."/>
            <person name="Larimer F."/>
            <person name="Land M."/>
            <person name="Hauser L."/>
            <person name="Challacombe J.F."/>
            <person name="Green L."/>
            <person name="Lindler L.E."/>
            <person name="Nikolich M.P."/>
            <person name="Richardson P."/>
        </authorList>
    </citation>
    <scope>NUCLEOTIDE SEQUENCE [LARGE SCALE GENOMIC DNA]</scope>
    <source>
        <strain>PB1/+</strain>
    </source>
</reference>
<name>Y747_YERPB</name>
<comment type="similarity">
    <text evidence="1">Belongs to the UPF0231 family.</text>
</comment>
<protein>
    <recommendedName>
        <fullName evidence="1">UPF0231 protein YPTS_0747</fullName>
    </recommendedName>
</protein>
<evidence type="ECO:0000255" key="1">
    <source>
        <dbReference type="HAMAP-Rule" id="MF_01053"/>
    </source>
</evidence>
<gene>
    <name type="ordered locus">YPTS_0747</name>
</gene>
<sequence length="119" mass="13772">MDYEFLRDLTGQVLVKFSMGHEVIGHWLNEEIKGDLVKLDHIETAADGVRGSERQWQLPGHEYTLWLDGEEVMVRANQLDLDGDEMEEGMNYYDEESLCLCGLEDFLLVLKGYRAFITQ</sequence>
<proteinExistence type="inferred from homology"/>
<feature type="chain" id="PRO_1000136311" description="UPF0231 protein YPTS_0747">
    <location>
        <begin position="1"/>
        <end position="119"/>
    </location>
</feature>